<organism>
    <name type="scientific">Prochlorococcus marinus (strain MIT 9515)</name>
    <dbReference type="NCBI Taxonomy" id="167542"/>
    <lineage>
        <taxon>Bacteria</taxon>
        <taxon>Bacillati</taxon>
        <taxon>Cyanobacteriota</taxon>
        <taxon>Cyanophyceae</taxon>
        <taxon>Synechococcales</taxon>
        <taxon>Prochlorococcaceae</taxon>
        <taxon>Prochlorococcus</taxon>
    </lineage>
</organism>
<gene>
    <name evidence="1" type="primary">rnpA</name>
    <name type="ordered locus">P9515_13561</name>
</gene>
<dbReference type="EC" id="3.1.26.5" evidence="1"/>
<dbReference type="EMBL" id="CP000552">
    <property type="protein sequence ID" value="ABM72563.1"/>
    <property type="molecule type" value="Genomic_DNA"/>
</dbReference>
<dbReference type="RefSeq" id="WP_011820660.1">
    <property type="nucleotide sequence ID" value="NC_008817.1"/>
</dbReference>
<dbReference type="SMR" id="A2BXQ2"/>
<dbReference type="STRING" id="167542.P9515_13561"/>
<dbReference type="GeneID" id="60201512"/>
<dbReference type="KEGG" id="pmc:P9515_13561"/>
<dbReference type="eggNOG" id="COG0594">
    <property type="taxonomic scope" value="Bacteria"/>
</dbReference>
<dbReference type="HOGENOM" id="CLU_117179_2_0_3"/>
<dbReference type="OrthoDB" id="540358at2"/>
<dbReference type="Proteomes" id="UP000001589">
    <property type="component" value="Chromosome"/>
</dbReference>
<dbReference type="GO" id="GO:0030677">
    <property type="term" value="C:ribonuclease P complex"/>
    <property type="evidence" value="ECO:0007669"/>
    <property type="project" value="TreeGrafter"/>
</dbReference>
<dbReference type="GO" id="GO:0042781">
    <property type="term" value="F:3'-tRNA processing endoribonuclease activity"/>
    <property type="evidence" value="ECO:0007669"/>
    <property type="project" value="TreeGrafter"/>
</dbReference>
<dbReference type="GO" id="GO:0004526">
    <property type="term" value="F:ribonuclease P activity"/>
    <property type="evidence" value="ECO:0007669"/>
    <property type="project" value="UniProtKB-UniRule"/>
</dbReference>
<dbReference type="GO" id="GO:0000049">
    <property type="term" value="F:tRNA binding"/>
    <property type="evidence" value="ECO:0007669"/>
    <property type="project" value="UniProtKB-UniRule"/>
</dbReference>
<dbReference type="GO" id="GO:0001682">
    <property type="term" value="P:tRNA 5'-leader removal"/>
    <property type="evidence" value="ECO:0007669"/>
    <property type="project" value="UniProtKB-UniRule"/>
</dbReference>
<dbReference type="Gene3D" id="3.30.230.10">
    <property type="match status" value="1"/>
</dbReference>
<dbReference type="HAMAP" id="MF_00227">
    <property type="entry name" value="RNase_P"/>
    <property type="match status" value="1"/>
</dbReference>
<dbReference type="InterPro" id="IPR020568">
    <property type="entry name" value="Ribosomal_Su5_D2-typ_SF"/>
</dbReference>
<dbReference type="InterPro" id="IPR014721">
    <property type="entry name" value="Ribsml_uS5_D2-typ_fold_subgr"/>
</dbReference>
<dbReference type="InterPro" id="IPR000100">
    <property type="entry name" value="RNase_P"/>
</dbReference>
<dbReference type="NCBIfam" id="TIGR00188">
    <property type="entry name" value="rnpA"/>
    <property type="match status" value="1"/>
</dbReference>
<dbReference type="PANTHER" id="PTHR33992">
    <property type="entry name" value="RIBONUCLEASE P PROTEIN COMPONENT"/>
    <property type="match status" value="1"/>
</dbReference>
<dbReference type="PANTHER" id="PTHR33992:SF1">
    <property type="entry name" value="RIBONUCLEASE P PROTEIN COMPONENT"/>
    <property type="match status" value="1"/>
</dbReference>
<dbReference type="Pfam" id="PF00825">
    <property type="entry name" value="Ribonuclease_P"/>
    <property type="match status" value="1"/>
</dbReference>
<dbReference type="SUPFAM" id="SSF54211">
    <property type="entry name" value="Ribosomal protein S5 domain 2-like"/>
    <property type="match status" value="1"/>
</dbReference>
<keyword id="KW-0255">Endonuclease</keyword>
<keyword id="KW-0378">Hydrolase</keyword>
<keyword id="KW-0540">Nuclease</keyword>
<keyword id="KW-0694">RNA-binding</keyword>
<keyword id="KW-0819">tRNA processing</keyword>
<protein>
    <recommendedName>
        <fullName evidence="1">Ribonuclease P protein component</fullName>
        <shortName evidence="1">RNase P protein</shortName>
        <shortName evidence="1">RNaseP protein</shortName>
        <ecNumber evidence="1">3.1.26.5</ecNumber>
    </recommendedName>
    <alternativeName>
        <fullName evidence="1">Protein C5</fullName>
    </alternativeName>
</protein>
<accession>A2BXQ2</accession>
<proteinExistence type="inferred from homology"/>
<sequence>MALPKAMRLKGHRTFDYIHKNSEKYYGKLMTFKIARSNPKILISHKNFNSLNNFKIAIAISKKVSKKAVVRNKIRRLLQDYFLKNFRKDKNHKPYWLLVNLKSSDSCNYESKLLQEFQHLIFKSGLLND</sequence>
<evidence type="ECO:0000255" key="1">
    <source>
        <dbReference type="HAMAP-Rule" id="MF_00227"/>
    </source>
</evidence>
<reference key="1">
    <citation type="journal article" date="2007" name="PLoS Genet.">
        <title>Patterns and implications of gene gain and loss in the evolution of Prochlorococcus.</title>
        <authorList>
            <person name="Kettler G.C."/>
            <person name="Martiny A.C."/>
            <person name="Huang K."/>
            <person name="Zucker J."/>
            <person name="Coleman M.L."/>
            <person name="Rodrigue S."/>
            <person name="Chen F."/>
            <person name="Lapidus A."/>
            <person name="Ferriera S."/>
            <person name="Johnson J."/>
            <person name="Steglich C."/>
            <person name="Church G.M."/>
            <person name="Richardson P."/>
            <person name="Chisholm S.W."/>
        </authorList>
    </citation>
    <scope>NUCLEOTIDE SEQUENCE [LARGE SCALE GENOMIC DNA]</scope>
    <source>
        <strain>MIT 9515</strain>
    </source>
</reference>
<comment type="function">
    <text evidence="1">RNaseP catalyzes the removal of the 5'-leader sequence from pre-tRNA to produce the mature 5'-terminus. It can also cleave other RNA substrates such as 4.5S RNA. The protein component plays an auxiliary but essential role in vivo by binding to the 5'-leader sequence and broadening the substrate specificity of the ribozyme.</text>
</comment>
<comment type="catalytic activity">
    <reaction evidence="1">
        <text>Endonucleolytic cleavage of RNA, removing 5'-extranucleotides from tRNA precursor.</text>
        <dbReference type="EC" id="3.1.26.5"/>
    </reaction>
</comment>
<comment type="subunit">
    <text evidence="1">Consists of a catalytic RNA component (M1 or rnpB) and a protein subunit.</text>
</comment>
<comment type="similarity">
    <text evidence="1">Belongs to the RnpA family.</text>
</comment>
<name>RNPA_PROM5</name>
<feature type="chain" id="PRO_1000194662" description="Ribonuclease P protein component">
    <location>
        <begin position="1"/>
        <end position="129"/>
    </location>
</feature>